<reference key="1">
    <citation type="journal article" date="1998" name="Nature">
        <title>Deciphering the biology of Mycobacterium tuberculosis from the complete genome sequence.</title>
        <authorList>
            <person name="Cole S.T."/>
            <person name="Brosch R."/>
            <person name="Parkhill J."/>
            <person name="Garnier T."/>
            <person name="Churcher C.M."/>
            <person name="Harris D.E."/>
            <person name="Gordon S.V."/>
            <person name="Eiglmeier K."/>
            <person name="Gas S."/>
            <person name="Barry C.E. III"/>
            <person name="Tekaia F."/>
            <person name="Badcock K."/>
            <person name="Basham D."/>
            <person name="Brown D."/>
            <person name="Chillingworth T."/>
            <person name="Connor R."/>
            <person name="Davies R.M."/>
            <person name="Devlin K."/>
            <person name="Feltwell T."/>
            <person name="Gentles S."/>
            <person name="Hamlin N."/>
            <person name="Holroyd S."/>
            <person name="Hornsby T."/>
            <person name="Jagels K."/>
            <person name="Krogh A."/>
            <person name="McLean J."/>
            <person name="Moule S."/>
            <person name="Murphy L.D."/>
            <person name="Oliver S."/>
            <person name="Osborne J."/>
            <person name="Quail M.A."/>
            <person name="Rajandream M.A."/>
            <person name="Rogers J."/>
            <person name="Rutter S."/>
            <person name="Seeger K."/>
            <person name="Skelton S."/>
            <person name="Squares S."/>
            <person name="Squares R."/>
            <person name="Sulston J.E."/>
            <person name="Taylor K."/>
            <person name="Whitehead S."/>
            <person name="Barrell B.G."/>
        </authorList>
    </citation>
    <scope>NUCLEOTIDE SEQUENCE [LARGE SCALE GENOMIC DNA]</scope>
    <source>
        <strain>ATCC 25618 / H37Rv</strain>
    </source>
</reference>
<reference key="2">
    <citation type="journal article" date="2002" name="Microbiology">
        <title>Re-annotation of the genome sequence of Mycobacterium tuberculosis H37Rv.</title>
        <authorList>
            <person name="Camus J.-C."/>
            <person name="Pryor M.J."/>
            <person name="Medigue C."/>
            <person name="Cole S.T."/>
        </authorList>
    </citation>
    <scope>SEQUENCE REVISION</scope>
    <source>
        <strain>ATCC 25618 / H37Rv</strain>
    </source>
</reference>
<reference key="3">
    <citation type="journal article" date="1999" name="J. Biol. Chem.">
        <title>Molecular cloning, sequencing, and expression of the gene encoding alkaline ceramidase from Pseudomonas aeruginosa. Cloning of a ceramidase homologue from Mycobacterium tuberculosis.</title>
        <authorList>
            <person name="Okino N."/>
            <person name="Ichinose S."/>
            <person name="Omori A."/>
            <person name="Imayama S."/>
            <person name="Nakamura T."/>
            <person name="Ito M."/>
        </authorList>
    </citation>
    <scope>FUNCTION</scope>
    <scope>CATALYTIC ACTIVITY</scope>
    <scope>BIOPHYSICOCHEMICAL PROPERTIES</scope>
</reference>
<reference key="4">
    <citation type="journal article" date="2010" name="Biosci. Biotechnol. Biochem.">
        <title>Expression, purification, and characterization of a recombinant neutral ceramidase from Mycobacterium tuberculosis.</title>
        <authorList>
            <person name="Okino N."/>
            <person name="Ikeda R."/>
            <person name="Ito M."/>
        </authorList>
    </citation>
    <scope>FUNCTION</scope>
    <scope>CATALYTIC ACTIVITY</scope>
    <scope>BIOPHYSICOCHEMICAL PROPERTIES</scope>
    <scope>ACTIVITY REGULATION</scope>
    <scope>SUBSTRATE SPECIFICITY</scope>
</reference>
<reference key="5">
    <citation type="journal article" date="2011" name="Mol. Cell. Proteomics">
        <title>Proteogenomic analysis of Mycobacterium tuberculosis by high resolution mass spectrometry.</title>
        <authorList>
            <person name="Kelkar D.S."/>
            <person name="Kumar D."/>
            <person name="Kumar P."/>
            <person name="Balakrishnan L."/>
            <person name="Muthusamy B."/>
            <person name="Yadav A.K."/>
            <person name="Shrivastava P."/>
            <person name="Marimuthu A."/>
            <person name="Anand S."/>
            <person name="Sundaram H."/>
            <person name="Kingsbury R."/>
            <person name="Harsha H.C."/>
            <person name="Nair B."/>
            <person name="Prasad T.S."/>
            <person name="Chauhan D.S."/>
            <person name="Katoch K."/>
            <person name="Katoch V.M."/>
            <person name="Kumar P."/>
            <person name="Chaerkady R."/>
            <person name="Ramachandran S."/>
            <person name="Dash D."/>
            <person name="Pandey A."/>
        </authorList>
    </citation>
    <scope>IDENTIFICATION BY MASS SPECTROMETRY [LARGE SCALE ANALYSIS]</scope>
    <source>
        <strain>ATCC 25618 / H37Rv</strain>
    </source>
</reference>
<feature type="chain" id="PRO_0000420250" description="Neutral ceramidase">
    <location>
        <begin position="1"/>
        <end position="637"/>
    </location>
</feature>
<feature type="active site" description="Nucleophile" evidence="1">
    <location>
        <position position="256"/>
    </location>
</feature>
<feature type="binding site" evidence="2">
    <location>
        <position position="34"/>
    </location>
    <ligand>
        <name>Mg(2+)</name>
        <dbReference type="ChEBI" id="CHEBI:18420"/>
    </ligand>
</feature>
<feature type="binding site" evidence="2">
    <location>
        <position position="96"/>
    </location>
    <ligand>
        <name>Zn(2+)</name>
        <dbReference type="ChEBI" id="CHEBI:29105"/>
    </ligand>
</feature>
<feature type="binding site" evidence="2">
    <location>
        <position position="204"/>
    </location>
    <ligand>
        <name>Zn(2+)</name>
        <dbReference type="ChEBI" id="CHEBI:29105"/>
    </ligand>
</feature>
<feature type="binding site" evidence="2">
    <location>
        <position position="417"/>
    </location>
    <ligand>
        <name>Zn(2+)</name>
        <dbReference type="ChEBI" id="CHEBI:29105"/>
    </ligand>
</feature>
<feature type="binding site" evidence="2">
    <location>
        <position position="453"/>
    </location>
    <ligand>
        <name>Zn(2+)</name>
        <dbReference type="ChEBI" id="CHEBI:29105"/>
    </ligand>
</feature>
<feature type="binding site" evidence="2">
    <location>
        <position position="575"/>
    </location>
    <ligand>
        <name>Mg(2+)</name>
        <dbReference type="ChEBI" id="CHEBI:18420"/>
    </ligand>
</feature>
<feature type="binding site" evidence="2">
    <location>
        <position position="577"/>
    </location>
    <ligand>
        <name>Mg(2+)</name>
        <dbReference type="ChEBI" id="CHEBI:18420"/>
    </ligand>
</feature>
<feature type="binding site" evidence="2">
    <location>
        <position position="580"/>
    </location>
    <ligand>
        <name>Mg(2+)</name>
        <dbReference type="ChEBI" id="CHEBI:18420"/>
    </ligand>
</feature>
<protein>
    <recommendedName>
        <fullName>Neutral ceramidase</fullName>
        <shortName>N-CDase</shortName>
        <shortName>NCDase</shortName>
        <ecNumber evidence="3 4">3.5.1.23</ecNumber>
    </recommendedName>
    <alternativeName>
        <fullName>Acylsphingosine deacylase</fullName>
    </alternativeName>
    <alternativeName>
        <fullName>N-acylsphingosine amidohydrolase</fullName>
    </alternativeName>
</protein>
<gene>
    <name type="ordered locus">Rv0669c</name>
</gene>
<dbReference type="EC" id="3.5.1.23" evidence="3 4"/>
<dbReference type="EMBL" id="AL123456">
    <property type="protein sequence ID" value="CCP43412.1"/>
    <property type="molecule type" value="Genomic_DNA"/>
</dbReference>
<dbReference type="PIR" id="H70535">
    <property type="entry name" value="H70535"/>
</dbReference>
<dbReference type="RefSeq" id="NP_215183.1">
    <property type="nucleotide sequence ID" value="NC_000962.3"/>
</dbReference>
<dbReference type="RefSeq" id="WP_003900995.1">
    <property type="nucleotide sequence ID" value="NZ_NVQJ01000007.1"/>
</dbReference>
<dbReference type="SMR" id="O06769"/>
<dbReference type="FunCoup" id="O06769">
    <property type="interactions" value="127"/>
</dbReference>
<dbReference type="STRING" id="83332.Rv0669c"/>
<dbReference type="SwissLipids" id="SLP:000001155"/>
<dbReference type="PaxDb" id="83332-Rv0669c"/>
<dbReference type="DNASU" id="888181"/>
<dbReference type="GeneID" id="888181"/>
<dbReference type="KEGG" id="mtu:Rv0669c"/>
<dbReference type="KEGG" id="mtv:RVBD_0669c"/>
<dbReference type="TubercuList" id="Rv0669c"/>
<dbReference type="eggNOG" id="ENOG502Z84X">
    <property type="taxonomic scope" value="Bacteria"/>
</dbReference>
<dbReference type="InParanoid" id="O06769"/>
<dbReference type="OrthoDB" id="6899210at2"/>
<dbReference type="Proteomes" id="UP000001584">
    <property type="component" value="Chromosome"/>
</dbReference>
<dbReference type="GO" id="GO:0005576">
    <property type="term" value="C:extracellular region"/>
    <property type="evidence" value="ECO:0000318"/>
    <property type="project" value="GO_Central"/>
</dbReference>
<dbReference type="GO" id="GO:0016020">
    <property type="term" value="C:membrane"/>
    <property type="evidence" value="ECO:0007669"/>
    <property type="project" value="GOC"/>
</dbReference>
<dbReference type="GO" id="GO:0009274">
    <property type="term" value="C:peptidoglycan-based cell wall"/>
    <property type="evidence" value="ECO:0007005"/>
    <property type="project" value="MTBBASE"/>
</dbReference>
<dbReference type="GO" id="GO:0046872">
    <property type="term" value="F:metal ion binding"/>
    <property type="evidence" value="ECO:0007669"/>
    <property type="project" value="UniProtKB-KW"/>
</dbReference>
<dbReference type="GO" id="GO:0017040">
    <property type="term" value="F:N-acylsphingosine amidohydrolase activity"/>
    <property type="evidence" value="ECO:0000314"/>
    <property type="project" value="MTBBASE"/>
</dbReference>
<dbReference type="GO" id="GO:0046514">
    <property type="term" value="P:ceramide catabolic process"/>
    <property type="evidence" value="ECO:0000314"/>
    <property type="project" value="MTBBASE"/>
</dbReference>
<dbReference type="GO" id="GO:0042759">
    <property type="term" value="P:long-chain fatty acid biosynthetic process"/>
    <property type="evidence" value="ECO:0000314"/>
    <property type="project" value="MTBBASE"/>
</dbReference>
<dbReference type="GO" id="GO:0046512">
    <property type="term" value="P:sphingosine biosynthetic process"/>
    <property type="evidence" value="ECO:0000314"/>
    <property type="project" value="MTBBASE"/>
</dbReference>
<dbReference type="Gene3D" id="2.60.40.2300">
    <property type="entry name" value="Neutral/alkaline non-lysosomal ceramidase, C-terminal domain"/>
    <property type="match status" value="1"/>
</dbReference>
<dbReference type="InterPro" id="IPR006823">
    <property type="entry name" value="Ceramidase_alk"/>
</dbReference>
<dbReference type="InterPro" id="IPR048153">
    <property type="entry name" value="Ceramidase_neut_Mycobact"/>
</dbReference>
<dbReference type="InterPro" id="IPR038445">
    <property type="entry name" value="NCDase_C_sf"/>
</dbReference>
<dbReference type="InterPro" id="IPR031331">
    <property type="entry name" value="NEUT/ALK_ceramidase_C"/>
</dbReference>
<dbReference type="InterPro" id="IPR031329">
    <property type="entry name" value="NEUT/ALK_ceramidase_N"/>
</dbReference>
<dbReference type="NCBIfam" id="NF041649">
    <property type="entry name" value="ceramidase_neut"/>
    <property type="match status" value="1"/>
</dbReference>
<dbReference type="PANTHER" id="PTHR12670">
    <property type="entry name" value="CERAMIDASE"/>
    <property type="match status" value="1"/>
</dbReference>
<dbReference type="PANTHER" id="PTHR12670:SF1">
    <property type="entry name" value="NEUTRAL CERAMIDASE"/>
    <property type="match status" value="1"/>
</dbReference>
<dbReference type="Pfam" id="PF04734">
    <property type="entry name" value="Ceramidase_alk"/>
    <property type="match status" value="1"/>
</dbReference>
<dbReference type="Pfam" id="PF17048">
    <property type="entry name" value="Ceramidse_alk_C"/>
    <property type="match status" value="1"/>
</dbReference>
<proteinExistence type="evidence at protein level"/>
<accession>O06769</accession>
<accession>F2GNL0</accession>
<accession>L0T7D5</accession>
<keyword id="KW-0378">Hydrolase</keyword>
<keyword id="KW-0443">Lipid metabolism</keyword>
<keyword id="KW-0460">Magnesium</keyword>
<keyword id="KW-0479">Metal-binding</keyword>
<keyword id="KW-1185">Reference proteome</keyword>
<keyword id="KW-0862">Zinc</keyword>
<comment type="function">
    <text evidence="3 4">Catalyzes the cleavage of the N-acyl linkage of the ceramides (Cers) to yield sphingosine (Sph) and free fatty acid. Also catalyzes the synthesis of Cers from Sph and fatty acid. Cers containning C6-C24 fatty acids are well hydrolyzed, and Cers with mono unsaturated fatty acids are much more hydrolyzed than those with saturated fatty acids.</text>
</comment>
<comment type="catalytic activity">
    <reaction evidence="3 4">
        <text>an N-acylsphing-4-enine + H2O = sphing-4-enine + a fatty acid</text>
        <dbReference type="Rhea" id="RHEA:20856"/>
        <dbReference type="ChEBI" id="CHEBI:15377"/>
        <dbReference type="ChEBI" id="CHEBI:28868"/>
        <dbReference type="ChEBI" id="CHEBI:52639"/>
        <dbReference type="ChEBI" id="CHEBI:57756"/>
        <dbReference type="EC" id="3.5.1.23"/>
    </reaction>
</comment>
<comment type="catalytic activity">
    <reaction evidence="4">
        <text>an N-acylsphinganine + H2O = sphinganine + a fatty acid</text>
        <dbReference type="Rhea" id="RHEA:33551"/>
        <dbReference type="ChEBI" id="CHEBI:15377"/>
        <dbReference type="ChEBI" id="CHEBI:28868"/>
        <dbReference type="ChEBI" id="CHEBI:31488"/>
        <dbReference type="ChEBI" id="CHEBI:57817"/>
    </reaction>
</comment>
<comment type="catalytic activity">
    <reaction evidence="4">
        <text>an N-acyl-(4R)-4-hydroxysphinganine + H2O = (4R)-hydroxysphinganine + a fatty acid</text>
        <dbReference type="Rhea" id="RHEA:33555"/>
        <dbReference type="ChEBI" id="CHEBI:15377"/>
        <dbReference type="ChEBI" id="CHEBI:28868"/>
        <dbReference type="ChEBI" id="CHEBI:31998"/>
        <dbReference type="ChEBI" id="CHEBI:64124"/>
    </reaction>
</comment>
<comment type="catalytic activity">
    <reaction evidence="4">
        <text>N-(9Z-octadecenoyl)-sphing-4-enine + H2O = sphing-4-enine + (9Z)-octadecenoate</text>
        <dbReference type="Rhea" id="RHEA:41299"/>
        <dbReference type="ChEBI" id="CHEBI:15377"/>
        <dbReference type="ChEBI" id="CHEBI:30823"/>
        <dbReference type="ChEBI" id="CHEBI:57756"/>
        <dbReference type="ChEBI" id="CHEBI:77996"/>
    </reaction>
</comment>
<comment type="catalytic activity">
    <reaction evidence="4">
        <text>N-(hexanoyl)sphing-4-enine + H2O = hexanoate + sphing-4-enine</text>
        <dbReference type="Rhea" id="RHEA:41295"/>
        <dbReference type="ChEBI" id="CHEBI:15377"/>
        <dbReference type="ChEBI" id="CHEBI:17120"/>
        <dbReference type="ChEBI" id="CHEBI:57756"/>
        <dbReference type="ChEBI" id="CHEBI:63867"/>
    </reaction>
</comment>
<comment type="catalytic activity">
    <reaction evidence="4">
        <text>N-hexadecanoylsphing-4-enine + H2O = sphing-4-enine + hexadecanoate</text>
        <dbReference type="Rhea" id="RHEA:38891"/>
        <dbReference type="ChEBI" id="CHEBI:7896"/>
        <dbReference type="ChEBI" id="CHEBI:15377"/>
        <dbReference type="ChEBI" id="CHEBI:57756"/>
        <dbReference type="ChEBI" id="CHEBI:72959"/>
    </reaction>
</comment>
<comment type="catalytic activity">
    <reaction evidence="4">
        <text>N-octadecanoylsphing-4-enine + H2O = sphing-4-enine + octadecanoate</text>
        <dbReference type="Rhea" id="RHEA:41279"/>
        <dbReference type="ChEBI" id="CHEBI:15377"/>
        <dbReference type="ChEBI" id="CHEBI:25629"/>
        <dbReference type="ChEBI" id="CHEBI:57756"/>
        <dbReference type="ChEBI" id="CHEBI:72961"/>
    </reaction>
</comment>
<comment type="catalytic activity">
    <reaction evidence="4">
        <text>N-eicosanoyl-sphing-4-enine + H2O = eicosanoate + sphing-4-enine</text>
        <dbReference type="Rhea" id="RHEA:41275"/>
        <dbReference type="ChEBI" id="CHEBI:15377"/>
        <dbReference type="ChEBI" id="CHEBI:32360"/>
        <dbReference type="ChEBI" id="CHEBI:57756"/>
        <dbReference type="ChEBI" id="CHEBI:72962"/>
    </reaction>
</comment>
<comment type="catalytic activity">
    <reaction evidence="4">
        <text>N-(15Z-tetracosenoyl)-sphing-4-enine + H2O = (15Z)-tetracosenoate + sphing-4-enine</text>
        <dbReference type="Rhea" id="RHEA:41267"/>
        <dbReference type="ChEBI" id="CHEBI:15377"/>
        <dbReference type="ChEBI" id="CHEBI:32392"/>
        <dbReference type="ChEBI" id="CHEBI:57756"/>
        <dbReference type="ChEBI" id="CHEBI:74450"/>
    </reaction>
</comment>
<comment type="catalytic activity">
    <reaction evidence="4">
        <text>N-tetracosanoyl-sphing-4-enine + H2O = tetracosanoate + sphing-4-enine</text>
        <dbReference type="Rhea" id="RHEA:41283"/>
        <dbReference type="ChEBI" id="CHEBI:15377"/>
        <dbReference type="ChEBI" id="CHEBI:31014"/>
        <dbReference type="ChEBI" id="CHEBI:57756"/>
        <dbReference type="ChEBI" id="CHEBI:72965"/>
    </reaction>
</comment>
<comment type="cofactor">
    <cofactor evidence="2">
        <name>Zn(2+)</name>
        <dbReference type="ChEBI" id="CHEBI:29105"/>
    </cofactor>
    <text evidence="2">Binds 1 zinc ion per subunit.</text>
</comment>
<comment type="cofactor">
    <cofactor evidence="2">
        <name>Mg(2+)</name>
        <dbReference type="ChEBI" id="CHEBI:18420"/>
    </cofactor>
</comment>
<comment type="activity regulation">
    <text evidence="4">90% of activity is inhibited by nickel, zinc and calcium ions. Magnesium, cobalt, copper and manganese ions inhibit between 50 and 80% of activity.</text>
</comment>
<comment type="biophysicochemical properties">
    <kinetics>
        <KM evidence="3 4">98.7 uM for N-dodecanoyl-7-nitrobenz-2-oxa-1,3-4-diazole (NBD)-D-erythro-sphingosine (C12-NBD-Cer) (at pH 8 and at 37 degrees Celsius)</KM>
        <Vmax evidence="3 4">21.1 pmol/min/mg enzyme (at pH 8 and at 37 degrees Celsius)</Vmax>
    </kinetics>
    <phDependence>
        <text evidence="3 4">Optimum pH is between 8 and 9.</text>
    </phDependence>
    <temperatureDependence>
        <text evidence="3 4">10 minutes at 100 degrees Celsius abolishes completely the activity.</text>
    </temperatureDependence>
</comment>
<comment type="similarity">
    <text evidence="5">Belongs to the neutral ceramidase family.</text>
</comment>
<name>NCASE_MYCTU</name>
<sequence length="637" mass="69490">MLSVGRGIADITGEAADCGMLGYGKSDQRTAGIHQRLRSRAFVFRDDSQDGDARLLLIVAELPLPMQNVNEEVLRRLADLYGDTYSEQNTLITATHTHAGPGGYCGYLLYNLTTSGFRPATFAAIVDGIVESVEHAHADVAPAEVSLSHGELYGASINRSPSAFDRNPPADKAFFPKRVDPHTTLVRIDRGEATVGVIHFFATHGTSMTNRNHLISGDNKGFAAYHWERTVGGADYLAGQPDFIAAFAQTNPGDMSPNVDGPLSPEAPPDREFDNTRRTGLCQFEDAFTQLSGATPIGAGIDARFTYVDLGSVLVRGEYTPDGEERRTGRPMFGAGAMAGTDEGPGFHGFRQGRNPFWDRLSRAMYRLARPTAAAQAPKGIVMPARLPNRIHPFVQEIVPVQLVRIGRLYLIGIPGEPTIVAGLRLRRMVASIVGADLADVLCVGYTNAYIHYVTTPEEYLEQRYEGGSTLFGRWELCALMQTVAELAEAMRDGRPVTLGRRPRPTRELSWVRGAPADAGSFGAVIAEPSATYRPGQAVEAVFVSALPNNDLRRGGTYLEVVRREGASWVRIADDGDWATSFRWQRQGRAGSHVSIRWDVPGDTTPGQYRIVHHGTARDRNGMLTAFSATTREFTVV</sequence>
<evidence type="ECO:0000250" key="1"/>
<evidence type="ECO:0000250" key="2">
    <source>
        <dbReference type="UniProtKB" id="Q9I596"/>
    </source>
</evidence>
<evidence type="ECO:0000269" key="3">
    <source>
    </source>
</evidence>
<evidence type="ECO:0000269" key="4">
    <source>
    </source>
</evidence>
<evidence type="ECO:0000305" key="5"/>
<organism>
    <name type="scientific">Mycobacterium tuberculosis (strain ATCC 25618 / H37Rv)</name>
    <dbReference type="NCBI Taxonomy" id="83332"/>
    <lineage>
        <taxon>Bacteria</taxon>
        <taxon>Bacillati</taxon>
        <taxon>Actinomycetota</taxon>
        <taxon>Actinomycetes</taxon>
        <taxon>Mycobacteriales</taxon>
        <taxon>Mycobacteriaceae</taxon>
        <taxon>Mycobacterium</taxon>
        <taxon>Mycobacterium tuberculosis complex</taxon>
    </lineage>
</organism>